<name>LIPA_LEGPH</name>
<protein>
    <recommendedName>
        <fullName evidence="1">Lipoyl synthase</fullName>
        <ecNumber evidence="1">2.8.1.8</ecNumber>
    </recommendedName>
    <alternativeName>
        <fullName evidence="1">Lip-syn</fullName>
        <shortName evidence="1">LS</shortName>
    </alternativeName>
    <alternativeName>
        <fullName evidence="1">Lipoate synthase</fullName>
    </alternativeName>
    <alternativeName>
        <fullName evidence="1">Lipoic acid synthase</fullName>
    </alternativeName>
    <alternativeName>
        <fullName evidence="1">Sulfur insertion protein LipA</fullName>
    </alternativeName>
</protein>
<evidence type="ECO:0000255" key="1">
    <source>
        <dbReference type="HAMAP-Rule" id="MF_00206"/>
    </source>
</evidence>
<evidence type="ECO:0000255" key="2">
    <source>
        <dbReference type="PROSITE-ProRule" id="PRU01266"/>
    </source>
</evidence>
<accession>Q5ZXI6</accession>
<organism>
    <name type="scientific">Legionella pneumophila subsp. pneumophila (strain Philadelphia 1 / ATCC 33152 / DSM 7513)</name>
    <dbReference type="NCBI Taxonomy" id="272624"/>
    <lineage>
        <taxon>Bacteria</taxon>
        <taxon>Pseudomonadati</taxon>
        <taxon>Pseudomonadota</taxon>
        <taxon>Gammaproteobacteria</taxon>
        <taxon>Legionellales</taxon>
        <taxon>Legionellaceae</taxon>
        <taxon>Legionella</taxon>
    </lineage>
</organism>
<reference key="1">
    <citation type="journal article" date="2004" name="Science">
        <title>The genomic sequence of the accidental pathogen Legionella pneumophila.</title>
        <authorList>
            <person name="Chien M."/>
            <person name="Morozova I."/>
            <person name="Shi S."/>
            <person name="Sheng H."/>
            <person name="Chen J."/>
            <person name="Gomez S.M."/>
            <person name="Asamani G."/>
            <person name="Hill K."/>
            <person name="Nuara J."/>
            <person name="Feder M."/>
            <person name="Rineer J."/>
            <person name="Greenberg J.J."/>
            <person name="Steshenko V."/>
            <person name="Park S.H."/>
            <person name="Zhao B."/>
            <person name="Teplitskaya E."/>
            <person name="Edwards J.R."/>
            <person name="Pampou S."/>
            <person name="Georghiou A."/>
            <person name="Chou I.-C."/>
            <person name="Iannuccilli W."/>
            <person name="Ulz M.E."/>
            <person name="Kim D.H."/>
            <person name="Geringer-Sameth A."/>
            <person name="Goldsberry C."/>
            <person name="Morozov P."/>
            <person name="Fischer S.G."/>
            <person name="Segal G."/>
            <person name="Qu X."/>
            <person name="Rzhetsky A."/>
            <person name="Zhang P."/>
            <person name="Cayanis E."/>
            <person name="De Jong P.J."/>
            <person name="Ju J."/>
            <person name="Kalachikov S."/>
            <person name="Shuman H.A."/>
            <person name="Russo J.J."/>
        </authorList>
    </citation>
    <scope>NUCLEOTIDE SEQUENCE [LARGE SCALE GENOMIC DNA]</scope>
    <source>
        <strain>Philadelphia 1 / ATCC 33152 / DSM 7513</strain>
    </source>
</reference>
<sequence length="329" mass="36742">MGKLIDIPIVVESGQKYKTSQGVTAIKDGIKSSGQDHERLPKPKWLRIVNHTTPAYSQVKEQVQKHRLATVCEEAKCPNISECWSHGTATIMLMGAVCTRACRFCSVDTGNPHGWLDAEEPENTAETVALMNLDYVVLTSVNRDDLPDGGANHYAKTIRAIKKRSPRTKVEALTPDFQGSERDVAVLLDSGVDVFAQNVETVERLTHPVRDNRAGYQQTLNVLAFAKKYRPDVLTKTSLMLGLGETDEEIIQTMDDLRTHHVDILTLGQYLQPTKNHLPIARYVTPETFSELRQIGLKKGFFEVASGPLVRSSYRADRVFKRDNLGLDV</sequence>
<proteinExistence type="inferred from homology"/>
<feature type="chain" id="PRO_0000325270" description="Lipoyl synthase">
    <location>
        <begin position="1"/>
        <end position="329"/>
    </location>
</feature>
<feature type="domain" description="Radical SAM core" evidence="2">
    <location>
        <begin position="83"/>
        <end position="303"/>
    </location>
</feature>
<feature type="binding site" evidence="1">
    <location>
        <position position="72"/>
    </location>
    <ligand>
        <name>[4Fe-4S] cluster</name>
        <dbReference type="ChEBI" id="CHEBI:49883"/>
        <label>1</label>
    </ligand>
</feature>
<feature type="binding site" evidence="1">
    <location>
        <position position="77"/>
    </location>
    <ligand>
        <name>[4Fe-4S] cluster</name>
        <dbReference type="ChEBI" id="CHEBI:49883"/>
        <label>1</label>
    </ligand>
</feature>
<feature type="binding site" evidence="1">
    <location>
        <position position="83"/>
    </location>
    <ligand>
        <name>[4Fe-4S] cluster</name>
        <dbReference type="ChEBI" id="CHEBI:49883"/>
        <label>1</label>
    </ligand>
</feature>
<feature type="binding site" evidence="1">
    <location>
        <position position="98"/>
    </location>
    <ligand>
        <name>[4Fe-4S] cluster</name>
        <dbReference type="ChEBI" id="CHEBI:49883"/>
        <label>2</label>
        <note>4Fe-4S-S-AdoMet</note>
    </ligand>
</feature>
<feature type="binding site" evidence="1">
    <location>
        <position position="102"/>
    </location>
    <ligand>
        <name>[4Fe-4S] cluster</name>
        <dbReference type="ChEBI" id="CHEBI:49883"/>
        <label>2</label>
        <note>4Fe-4S-S-AdoMet</note>
    </ligand>
</feature>
<feature type="binding site" evidence="1">
    <location>
        <position position="105"/>
    </location>
    <ligand>
        <name>[4Fe-4S] cluster</name>
        <dbReference type="ChEBI" id="CHEBI:49883"/>
        <label>2</label>
        <note>4Fe-4S-S-AdoMet</note>
    </ligand>
</feature>
<feature type="binding site" evidence="1">
    <location>
        <position position="313"/>
    </location>
    <ligand>
        <name>[4Fe-4S] cluster</name>
        <dbReference type="ChEBI" id="CHEBI:49883"/>
        <label>1</label>
    </ligand>
</feature>
<keyword id="KW-0004">4Fe-4S</keyword>
<keyword id="KW-0963">Cytoplasm</keyword>
<keyword id="KW-0408">Iron</keyword>
<keyword id="KW-0411">Iron-sulfur</keyword>
<keyword id="KW-0479">Metal-binding</keyword>
<keyword id="KW-1185">Reference proteome</keyword>
<keyword id="KW-0949">S-adenosyl-L-methionine</keyword>
<keyword id="KW-0808">Transferase</keyword>
<dbReference type="EC" id="2.8.1.8" evidence="1"/>
<dbReference type="EMBL" id="AE017354">
    <property type="protein sequence ID" value="AAU26834.1"/>
    <property type="molecule type" value="Genomic_DNA"/>
</dbReference>
<dbReference type="RefSeq" id="WP_010946482.1">
    <property type="nucleotide sequence ID" value="NC_002942.5"/>
</dbReference>
<dbReference type="RefSeq" id="YP_094781.1">
    <property type="nucleotide sequence ID" value="NC_002942.5"/>
</dbReference>
<dbReference type="SMR" id="Q5ZXI6"/>
<dbReference type="STRING" id="272624.lpg0745"/>
<dbReference type="PaxDb" id="272624-lpg0745"/>
<dbReference type="DNASU" id="3080295"/>
<dbReference type="GeneID" id="57034737"/>
<dbReference type="KEGG" id="lpn:lpg0745"/>
<dbReference type="PATRIC" id="fig|272624.6.peg.768"/>
<dbReference type="eggNOG" id="COG0320">
    <property type="taxonomic scope" value="Bacteria"/>
</dbReference>
<dbReference type="HOGENOM" id="CLU_033144_2_0_6"/>
<dbReference type="OrthoDB" id="9787898at2"/>
<dbReference type="UniPathway" id="UPA00538">
    <property type="reaction ID" value="UER00593"/>
</dbReference>
<dbReference type="Proteomes" id="UP000000609">
    <property type="component" value="Chromosome"/>
</dbReference>
<dbReference type="GO" id="GO:0005737">
    <property type="term" value="C:cytoplasm"/>
    <property type="evidence" value="ECO:0007669"/>
    <property type="project" value="UniProtKB-SubCell"/>
</dbReference>
<dbReference type="GO" id="GO:0051539">
    <property type="term" value="F:4 iron, 4 sulfur cluster binding"/>
    <property type="evidence" value="ECO:0007669"/>
    <property type="project" value="UniProtKB-UniRule"/>
</dbReference>
<dbReference type="GO" id="GO:0016992">
    <property type="term" value="F:lipoate synthase activity"/>
    <property type="evidence" value="ECO:0007669"/>
    <property type="project" value="UniProtKB-UniRule"/>
</dbReference>
<dbReference type="GO" id="GO:0046872">
    <property type="term" value="F:metal ion binding"/>
    <property type="evidence" value="ECO:0007669"/>
    <property type="project" value="UniProtKB-KW"/>
</dbReference>
<dbReference type="CDD" id="cd01335">
    <property type="entry name" value="Radical_SAM"/>
    <property type="match status" value="1"/>
</dbReference>
<dbReference type="FunFam" id="3.20.20.70:FF:000040">
    <property type="entry name" value="Lipoyl synthase"/>
    <property type="match status" value="1"/>
</dbReference>
<dbReference type="Gene3D" id="3.20.20.70">
    <property type="entry name" value="Aldolase class I"/>
    <property type="match status" value="1"/>
</dbReference>
<dbReference type="HAMAP" id="MF_00206">
    <property type="entry name" value="Lipoyl_synth"/>
    <property type="match status" value="1"/>
</dbReference>
<dbReference type="InterPro" id="IPR013785">
    <property type="entry name" value="Aldolase_TIM"/>
</dbReference>
<dbReference type="InterPro" id="IPR006638">
    <property type="entry name" value="Elp3/MiaA/NifB-like_rSAM"/>
</dbReference>
<dbReference type="InterPro" id="IPR003698">
    <property type="entry name" value="Lipoyl_synth"/>
</dbReference>
<dbReference type="InterPro" id="IPR007197">
    <property type="entry name" value="rSAM"/>
</dbReference>
<dbReference type="NCBIfam" id="TIGR00510">
    <property type="entry name" value="lipA"/>
    <property type="match status" value="1"/>
</dbReference>
<dbReference type="NCBIfam" id="NF004019">
    <property type="entry name" value="PRK05481.1"/>
    <property type="match status" value="1"/>
</dbReference>
<dbReference type="NCBIfam" id="NF009544">
    <property type="entry name" value="PRK12928.1"/>
    <property type="match status" value="1"/>
</dbReference>
<dbReference type="PANTHER" id="PTHR10949">
    <property type="entry name" value="LIPOYL SYNTHASE"/>
    <property type="match status" value="1"/>
</dbReference>
<dbReference type="PANTHER" id="PTHR10949:SF0">
    <property type="entry name" value="LIPOYL SYNTHASE, MITOCHONDRIAL"/>
    <property type="match status" value="1"/>
</dbReference>
<dbReference type="Pfam" id="PF04055">
    <property type="entry name" value="Radical_SAM"/>
    <property type="match status" value="1"/>
</dbReference>
<dbReference type="PIRSF" id="PIRSF005963">
    <property type="entry name" value="Lipoyl_synth"/>
    <property type="match status" value="1"/>
</dbReference>
<dbReference type="SFLD" id="SFLDF00271">
    <property type="entry name" value="lipoyl_synthase"/>
    <property type="match status" value="1"/>
</dbReference>
<dbReference type="SFLD" id="SFLDG01058">
    <property type="entry name" value="lipoyl_synthase_like"/>
    <property type="match status" value="1"/>
</dbReference>
<dbReference type="SMART" id="SM00729">
    <property type="entry name" value="Elp3"/>
    <property type="match status" value="1"/>
</dbReference>
<dbReference type="SUPFAM" id="SSF102114">
    <property type="entry name" value="Radical SAM enzymes"/>
    <property type="match status" value="1"/>
</dbReference>
<dbReference type="PROSITE" id="PS51918">
    <property type="entry name" value="RADICAL_SAM"/>
    <property type="match status" value="1"/>
</dbReference>
<gene>
    <name evidence="1" type="primary">lipA</name>
    <name type="ordered locus">lpg0745</name>
</gene>
<comment type="function">
    <text evidence="1">Catalyzes the radical-mediated insertion of two sulfur atoms into the C-6 and C-8 positions of the octanoyl moiety bound to the lipoyl domains of lipoate-dependent enzymes, thereby converting the octanoylated domains into lipoylated derivatives.</text>
</comment>
<comment type="catalytic activity">
    <reaction evidence="1">
        <text>[[Fe-S] cluster scaffold protein carrying a second [4Fe-4S](2+) cluster] + N(6)-octanoyl-L-lysyl-[protein] + 2 oxidized [2Fe-2S]-[ferredoxin] + 2 S-adenosyl-L-methionine + 4 H(+) = [[Fe-S] cluster scaffold protein] + N(6)-[(R)-dihydrolipoyl]-L-lysyl-[protein] + 4 Fe(3+) + 2 hydrogen sulfide + 2 5'-deoxyadenosine + 2 L-methionine + 2 reduced [2Fe-2S]-[ferredoxin]</text>
        <dbReference type="Rhea" id="RHEA:16585"/>
        <dbReference type="Rhea" id="RHEA-COMP:9928"/>
        <dbReference type="Rhea" id="RHEA-COMP:10000"/>
        <dbReference type="Rhea" id="RHEA-COMP:10001"/>
        <dbReference type="Rhea" id="RHEA-COMP:10475"/>
        <dbReference type="Rhea" id="RHEA-COMP:14568"/>
        <dbReference type="Rhea" id="RHEA-COMP:14569"/>
        <dbReference type="ChEBI" id="CHEBI:15378"/>
        <dbReference type="ChEBI" id="CHEBI:17319"/>
        <dbReference type="ChEBI" id="CHEBI:29034"/>
        <dbReference type="ChEBI" id="CHEBI:29919"/>
        <dbReference type="ChEBI" id="CHEBI:33722"/>
        <dbReference type="ChEBI" id="CHEBI:33737"/>
        <dbReference type="ChEBI" id="CHEBI:33738"/>
        <dbReference type="ChEBI" id="CHEBI:57844"/>
        <dbReference type="ChEBI" id="CHEBI:59789"/>
        <dbReference type="ChEBI" id="CHEBI:78809"/>
        <dbReference type="ChEBI" id="CHEBI:83100"/>
        <dbReference type="EC" id="2.8.1.8"/>
    </reaction>
</comment>
<comment type="cofactor">
    <cofactor evidence="1">
        <name>[4Fe-4S] cluster</name>
        <dbReference type="ChEBI" id="CHEBI:49883"/>
    </cofactor>
    <text evidence="1">Binds 2 [4Fe-4S] clusters per subunit. One cluster is coordinated with 3 cysteines and an exchangeable S-adenosyl-L-methionine.</text>
</comment>
<comment type="pathway">
    <text evidence="1">Protein modification; protein lipoylation via endogenous pathway; protein N(6)-(lipoyl)lysine from octanoyl-[acyl-carrier-protein]: step 2/2.</text>
</comment>
<comment type="subcellular location">
    <subcellularLocation>
        <location evidence="1">Cytoplasm</location>
    </subcellularLocation>
</comment>
<comment type="similarity">
    <text evidence="1">Belongs to the radical SAM superfamily. Lipoyl synthase family.</text>
</comment>